<protein>
    <recommendedName>
        <fullName evidence="23">Protein S100-A8</fullName>
    </recommendedName>
    <alternativeName>
        <fullName>Calgranulin-A</fullName>
    </alternativeName>
    <alternativeName>
        <fullName>Calprotectin L1L subunit</fullName>
    </alternativeName>
    <alternativeName>
        <fullName>Cystic fibrosis antigen</fullName>
        <shortName>CFAG</shortName>
    </alternativeName>
    <alternativeName>
        <fullName>Leukocyte L1 complex light chain</fullName>
    </alternativeName>
    <alternativeName>
        <fullName>Migration inhibitory factor-related protein 8</fullName>
        <shortName>MRP-8</shortName>
        <shortName>p8</shortName>
    </alternativeName>
    <alternativeName>
        <fullName>S100 calcium-binding protein A8</fullName>
    </alternativeName>
    <alternativeName>
        <fullName>Urinary stone protein band A</fullName>
    </alternativeName>
</protein>
<sequence>MLTELEKALNSIIDVYHKYSLIKGNFHAVYRDDLKKLLETECPQYIRKKGADVWFKELDINTDGAVNFQEFLILVIKMGVAAHKKSHEESHKE</sequence>
<evidence type="ECO:0000250" key="1"/>
<evidence type="ECO:0000250" key="2">
    <source>
        <dbReference type="UniProtKB" id="P27005"/>
    </source>
</evidence>
<evidence type="ECO:0000255" key="3">
    <source>
        <dbReference type="PROSITE-ProRule" id="PRU00448"/>
    </source>
</evidence>
<evidence type="ECO:0000269" key="4">
    <source>
    </source>
</evidence>
<evidence type="ECO:0000269" key="5">
    <source>
    </source>
</evidence>
<evidence type="ECO:0000269" key="6">
    <source>
    </source>
</evidence>
<evidence type="ECO:0000269" key="7">
    <source>
    </source>
</evidence>
<evidence type="ECO:0000269" key="8">
    <source>
    </source>
</evidence>
<evidence type="ECO:0000269" key="9">
    <source>
    </source>
</evidence>
<evidence type="ECO:0000269" key="10">
    <source>
    </source>
</evidence>
<evidence type="ECO:0000269" key="11">
    <source>
    </source>
</evidence>
<evidence type="ECO:0000269" key="12">
    <source>
    </source>
</evidence>
<evidence type="ECO:0000269" key="13">
    <source>
    </source>
</evidence>
<evidence type="ECO:0000269" key="14">
    <source>
    </source>
</evidence>
<evidence type="ECO:0000269" key="15">
    <source>
    </source>
</evidence>
<evidence type="ECO:0000269" key="16">
    <source>
    </source>
</evidence>
<evidence type="ECO:0000269" key="17">
    <source>
    </source>
</evidence>
<evidence type="ECO:0000269" key="18">
    <source>
    </source>
</evidence>
<evidence type="ECO:0000269" key="19">
    <source>
    </source>
</evidence>
<evidence type="ECO:0000269" key="20">
    <source>
    </source>
</evidence>
<evidence type="ECO:0000269" key="21">
    <source>
    </source>
</evidence>
<evidence type="ECO:0000269" key="22">
    <source>
    </source>
</evidence>
<evidence type="ECO:0000305" key="23"/>
<evidence type="ECO:0000305" key="24">
    <source>
    </source>
</evidence>
<evidence type="ECO:0000312" key="25">
    <source>
        <dbReference type="HGNC" id="HGNC:10498"/>
    </source>
</evidence>
<evidence type="ECO:0007829" key="26">
    <source>
        <dbReference type="PDB" id="4GGF"/>
    </source>
</evidence>
<keyword id="KW-0002">3D-structure</keyword>
<keyword id="KW-0929">Antimicrobial</keyword>
<keyword id="KW-0053">Apoptosis</keyword>
<keyword id="KW-0072">Autophagy</keyword>
<keyword id="KW-0106">Calcium</keyword>
<keyword id="KW-1003">Cell membrane</keyword>
<keyword id="KW-0145">Chemotaxis</keyword>
<keyword id="KW-0963">Cytoplasm</keyword>
<keyword id="KW-0206">Cytoskeleton</keyword>
<keyword id="KW-0903">Direct protein sequencing</keyword>
<keyword id="KW-0391">Immunity</keyword>
<keyword id="KW-0395">Inflammatory response</keyword>
<keyword id="KW-0399">Innate immunity</keyword>
<keyword id="KW-0472">Membrane</keyword>
<keyword id="KW-0479">Metal-binding</keyword>
<keyword id="KW-1267">Proteomics identification</keyword>
<keyword id="KW-1185">Reference proteome</keyword>
<keyword id="KW-0677">Repeat</keyword>
<keyword id="KW-0702">S-nitrosylation</keyword>
<keyword id="KW-0964">Secreted</keyword>
<keyword id="KW-0862">Zinc</keyword>
<accession>P05109</accession>
<accession>A8K5L3</accession>
<accession>D3DV37</accession>
<accession>Q5SY70</accession>
<accession>Q9UC84</accession>
<accession>Q9UC92</accession>
<accession>Q9UCJ0</accession>
<accession>Q9UCM6</accession>
<proteinExistence type="evidence at protein level"/>
<gene>
    <name evidence="25" type="primary">S100A8</name>
    <name type="synonym">CAGA</name>
    <name type="synonym">CFAG</name>
    <name type="synonym">MRP8</name>
</gene>
<comment type="function">
    <text evidence="5 6 7 8 9 13 14 15 16 17 18 19 20">S100A8 is a calcium- and zinc-binding protein which plays a prominent role in the regulation of inflammatory processes and immune response. It can induce neutrophil chemotaxis and adhesion. Predominantly found as calprotectin (S100A8/A9) which has a wide plethora of intra- and extracellular functions. The intracellular functions include: facilitating leukocyte arachidonic acid trafficking and metabolism, modulation of the tubulin-dependent cytoskeleton during migration of phagocytes and activation of the neutrophilic NADPH-oxidase. Also participates in regulatory T-cell differentiation together with CD69 (PubMed:26296369). Activates NADPH-oxidase by facilitating the enzyme complex assembly at the cell membrane, transferring arachidonic acid, an essential cofactor, to the enzyme complex and S100A8 contributes to the enzyme assembly by directly binding to NCF2/P67PHOX. The extracellular functions involve pro-inflammatory, antimicrobial, oxidant-scavenging and apoptosis-inducing activities. Its pro-inflammatory activity includes recruitment of leukocytes, promotion of cytokine and chemokine production, and regulation of leukocyte adhesion and migration. Acts as an alarmin or a danger associated molecular pattern (DAMP) molecule and stimulates innate immune cells via binding to pattern recognition receptors such as Toll-like receptor 4 (TLR4) and receptor for advanced glycation endproducts (AGER). Binding to TLR4 and AGER activates the MAP-kinase and NF-kappa-B signaling pathways resulting in the amplification of the pro-inflammatory cascade. Has antimicrobial activity towards bacteria and fungi and exerts its antimicrobial activity probably via chelation of Zn(2+) which is essential for microbial growth. Can induce cell death via autophagy and apoptosis and this occurs through the cross-talk of mitochondria and lysosomes via reactive oxygen species (ROS) and the process involves BNIP3. Can regulate neutrophil number and apoptosis by an anti-apoptotic effect; regulates cell survival via ITGAM/ITGB and TLR4 and a signaling mechanism involving MEK-ERK. Its role as an oxidant scavenger has a protective role in preventing exaggerated tissue damage by scavenging oxidants. Can act as a potent amplifier of inflammation in autoimmunity as well as in cancer development and tumor spread. The iNOS-S100A8/A9 transnitrosylase complex directs selective inflammatory stimulus-dependent S-nitrosylation of GAPDH and probably multiple targets such as ANXA5, EZR, MSN and VIM by recognizing a [IL]-x-C-x-x-[DE] motif; S100A8 seems to contribute to S-nitrosylation site selectivity.</text>
</comment>
<comment type="function">
    <text evidence="24">(Microbial infection) Upon infection by human coronavirus SARS-CoV-2, may induce expansion of aberrant immature neutrophils in a TLR4-dependent manner.</text>
</comment>
<comment type="activity regulation">
    <text evidence="2">Calprotectin (S100A8/A9) activity on TLR4 signaling is inhibited by paquinimod.</text>
</comment>
<comment type="subunit">
    <text evidence="1 4 6 8 9 10 11 14 18 19 20 22">Homodimer. Preferentially exists as a heterodimer or heterotetramer with S100A9 known as calprotectin (S100A8/A9). S100A8 interacts with AGER, ATP2A2 and with the heterodimeric complex formed by TLR4 and LY96 (By similarity). Interacts with GAPDH. Calprotectin (S100A8/9) interacts with CEACAM3 and tubulin filaments in a calcium-dependent manner. Heterotetrameric calprotectin (S100A8/A9) interacts with ANXA6 and associates with tubulin filaments in activated monocytes. S100A8 and calprotectin (S100A8/9) interact with NCF2/P67PHOX, RAC1 and RAC2. Calprotectin (S100A8/9) interacts with CYBA and CYBB. Calprotectin (S100A8/9) interacts with NOS2 to form the iNOS-S100A8/A9 transnitrosylase complex; induced by LDL(ox) (PubMed:25417112). Calprotectin (S100A8/9) interacts with CD69 (PubMed:26296369).</text>
</comment>
<comment type="interaction">
    <interactant intactId="EBI-355281">
        <id>P05109</id>
    </interactant>
    <interactant intactId="EBI-354056">
        <id>P04406</id>
        <label>GAPDH</label>
    </interactant>
    <organismsDiffer>false</organismsDiffer>
    <experiments>6</experiments>
</comment>
<comment type="interaction">
    <interactant intactId="EBI-355281">
        <id>P05109</id>
    </interactant>
    <interactant intactId="EBI-1055001">
        <id>P06702</id>
        <label>S100A9</label>
    </interactant>
    <organismsDiffer>false</organismsDiffer>
    <experiments>7</experiments>
</comment>
<comment type="interaction">
    <interactant intactId="EBI-355281">
        <id>P05109</id>
    </interactant>
    <interactant intactId="EBI-11723041">
        <id>Q8TD43</id>
        <label>TRPM4</label>
    </interactant>
    <organismsDiffer>false</organismsDiffer>
    <experiments>2</experiments>
</comment>
<comment type="subcellular location">
    <subcellularLocation>
        <location>Secreted</location>
    </subcellularLocation>
    <subcellularLocation>
        <location>Cytoplasm</location>
    </subcellularLocation>
    <subcellularLocation>
        <location>Cytoplasm</location>
        <location>Cytoskeleton</location>
    </subcellularLocation>
    <subcellularLocation>
        <location>Cell membrane</location>
        <topology>Peripheral membrane protein</topology>
    </subcellularLocation>
    <text>Predominantly localized in the cytoplasm. Upon elevation of the intracellular calcium level, translocated from the cytoplasm to the cytoskeleton and the cell membrane. Upon neutrophil activation or endothelial adhesion of monocytes, is secreted via a microtubule-mediated, alternative pathway.</text>
</comment>
<comment type="tissue specificity">
    <text evidence="7 21 22">Calprotectin (S100A8/9) is predominantly expressed in myeloid cells. Except for inflammatory conditions, the expression is restricted to a specific stage of myeloid differentiation since both proteins are expressed in circulating neutrophils and monocytes but are absent in normal tissue macrophages and lymphocytes. Under chronic inflammatory conditions, such as psoriasis and malignant disorders, also expressed in the epidermis. Found in high concentrations at local sites of inflammation or in the serum of patients with inflammatory diseases such as rheumatoid, cystic fibrosis, inflammatory bowel disease, Crohn's disease, giant cell arteritis, cystic fibrosis, Sjogren's syndrome, systemic lupus erythematosus, and progressive systemic sclerosis. Involved in the formation and deposition of amyloids in the aging prostate known as corpora amylacea inclusions. Strongly up-regulated in many tumors, including gastric, esophageal, colon, pancreatic, bladder, ovarian, thyroid, breast and skin cancers.</text>
</comment>
<comment type="induction">
    <text evidence="21">(Microbial infection) Expression is highly induced in CD14(+) monocytes, neutrophils, and developing neutrophils of patients infected by SARS-COV-2.</text>
</comment>
<comment type="miscellaneous">
    <text>Binds two calcium ions per molecule with an affinity similar to that of the S100 proteins.</text>
</comment>
<comment type="similarity">
    <text evidence="23">Belongs to the S-100 family.</text>
</comment>
<comment type="online information" name="Atlas of Genetics and Cytogenetics in Oncology and Haematology">
    <link uri="https://atlasgeneticsoncology.org/gene/46446/S100A8"/>
</comment>
<dbReference type="EMBL" id="Y00278">
    <property type="protein sequence ID" value="CAA68390.1"/>
    <property type="molecule type" value="mRNA"/>
</dbReference>
<dbReference type="EMBL" id="X06234">
    <property type="protein sequence ID" value="CAA29580.1"/>
    <property type="molecule type" value="mRNA"/>
</dbReference>
<dbReference type="EMBL" id="M21005">
    <property type="protein sequence ID" value="AAA36327.1"/>
    <property type="molecule type" value="Genomic_DNA"/>
</dbReference>
<dbReference type="EMBL" id="AK291328">
    <property type="protein sequence ID" value="BAF84017.1"/>
    <property type="molecule type" value="mRNA"/>
</dbReference>
<dbReference type="EMBL" id="CR407674">
    <property type="protein sequence ID" value="CAG28602.1"/>
    <property type="molecule type" value="mRNA"/>
</dbReference>
<dbReference type="EMBL" id="BT007378">
    <property type="protein sequence ID" value="AAP36042.1"/>
    <property type="molecule type" value="mRNA"/>
</dbReference>
<dbReference type="EMBL" id="AL591704">
    <property type="status" value="NOT_ANNOTATED_CDS"/>
    <property type="molecule type" value="Genomic_DNA"/>
</dbReference>
<dbReference type="EMBL" id="CH471121">
    <property type="protein sequence ID" value="EAW53330.1"/>
    <property type="molecule type" value="Genomic_DNA"/>
</dbReference>
<dbReference type="EMBL" id="CH471121">
    <property type="protein sequence ID" value="EAW53331.1"/>
    <property type="molecule type" value="Genomic_DNA"/>
</dbReference>
<dbReference type="EMBL" id="BC005928">
    <property type="protein sequence ID" value="AAH05928.1"/>
    <property type="molecule type" value="mRNA"/>
</dbReference>
<dbReference type="CCDS" id="CCDS1038.1"/>
<dbReference type="PIR" id="A31848">
    <property type="entry name" value="BCHUCF"/>
</dbReference>
<dbReference type="RefSeq" id="NP_001306126.1">
    <property type="nucleotide sequence ID" value="NM_001319197.1"/>
</dbReference>
<dbReference type="RefSeq" id="NP_001306127.1">
    <property type="nucleotide sequence ID" value="NM_001319198.1"/>
</dbReference>
<dbReference type="RefSeq" id="NP_001306130.1">
    <property type="nucleotide sequence ID" value="NM_001319201.2"/>
</dbReference>
<dbReference type="RefSeq" id="NP_002955.2">
    <property type="nucleotide sequence ID" value="NM_002964.4"/>
</dbReference>
<dbReference type="PDB" id="1MR8">
    <property type="method" value="X-ray"/>
    <property type="resolution" value="1.90 A"/>
    <property type="chains" value="A/B=1-93"/>
</dbReference>
<dbReference type="PDB" id="1XK4">
    <property type="method" value="X-ray"/>
    <property type="resolution" value="1.80 A"/>
    <property type="chains" value="A/B/E/F/I/J=1-93"/>
</dbReference>
<dbReference type="PDB" id="4GGF">
    <property type="method" value="X-ray"/>
    <property type="resolution" value="1.60 A"/>
    <property type="chains" value="A/K/S/U=1-93"/>
</dbReference>
<dbReference type="PDB" id="4XJK">
    <property type="method" value="X-ray"/>
    <property type="resolution" value="1.76 A"/>
    <property type="chains" value="A/C/E/G/I=1-93"/>
</dbReference>
<dbReference type="PDB" id="5HLO">
    <property type="method" value="X-ray"/>
    <property type="resolution" value="2.10 A"/>
    <property type="chains" value="A/B/C/D=2-93"/>
</dbReference>
<dbReference type="PDB" id="5HLV">
    <property type="method" value="X-ray"/>
    <property type="resolution" value="2.20 A"/>
    <property type="chains" value="A/B/C/D/E/F/G/H=2-93"/>
</dbReference>
<dbReference type="PDB" id="5W1F">
    <property type="method" value="X-ray"/>
    <property type="resolution" value="2.60 A"/>
    <property type="chains" value="A/C/E/G=1-93"/>
</dbReference>
<dbReference type="PDB" id="6DS2">
    <property type="method" value="X-ray"/>
    <property type="resolution" value="2.10 A"/>
    <property type="chains" value="A/C/E/G=1-93"/>
</dbReference>
<dbReference type="PDB" id="7QUV">
    <property type="method" value="X-ray"/>
    <property type="resolution" value="1.85 A"/>
    <property type="chains" value="A=1-93"/>
</dbReference>
<dbReference type="PDB" id="8SJB">
    <property type="method" value="X-ray"/>
    <property type="resolution" value="1.74 A"/>
    <property type="chains" value="A/B=1-88"/>
</dbReference>
<dbReference type="PDB" id="8SJC">
    <property type="method" value="X-ray"/>
    <property type="resolution" value="1.87 A"/>
    <property type="chains" value="A/B=1-87"/>
</dbReference>
<dbReference type="PDBsum" id="1MR8"/>
<dbReference type="PDBsum" id="1XK4"/>
<dbReference type="PDBsum" id="4GGF"/>
<dbReference type="PDBsum" id="4XJK"/>
<dbReference type="PDBsum" id="5HLO"/>
<dbReference type="PDBsum" id="5HLV"/>
<dbReference type="PDBsum" id="5W1F"/>
<dbReference type="PDBsum" id="6DS2"/>
<dbReference type="PDBsum" id="7QUV"/>
<dbReference type="PDBsum" id="8SJB"/>
<dbReference type="PDBsum" id="8SJC"/>
<dbReference type="SMR" id="P05109"/>
<dbReference type="BioGRID" id="112187">
    <property type="interactions" value="206"/>
</dbReference>
<dbReference type="ComplexPortal" id="CPX-37">
    <property type="entry name" value="Calprotectin heterotetramer"/>
</dbReference>
<dbReference type="ComplexPortal" id="CPX-39">
    <property type="entry name" value="Calprotectin heterodimer"/>
</dbReference>
<dbReference type="ComplexPortal" id="CPX-42">
    <property type="entry name" value="S100A8 complex"/>
</dbReference>
<dbReference type="ComplexPortal" id="CPX-52">
    <property type="entry name" value="iNOS-S100A8/A9 complex"/>
</dbReference>
<dbReference type="CORUM" id="P05109"/>
<dbReference type="DIP" id="DIP-1165N"/>
<dbReference type="FunCoup" id="P05109">
    <property type="interactions" value="887"/>
</dbReference>
<dbReference type="IntAct" id="P05109">
    <property type="interactions" value="103"/>
</dbReference>
<dbReference type="MINT" id="P05109"/>
<dbReference type="STRING" id="9606.ENSP00000357721"/>
<dbReference type="DrugBank" id="DB01373">
    <property type="generic name" value="Calcium"/>
</dbReference>
<dbReference type="DrugBank" id="DB09130">
    <property type="generic name" value="Copper"/>
</dbReference>
<dbReference type="DrugBank" id="DB01593">
    <property type="generic name" value="Zinc"/>
</dbReference>
<dbReference type="DrugBank" id="DB14487">
    <property type="generic name" value="Zinc acetate"/>
</dbReference>
<dbReference type="DrugBank" id="DB14533">
    <property type="generic name" value="Zinc chloride"/>
</dbReference>
<dbReference type="DrugBank" id="DB14548">
    <property type="generic name" value="Zinc sulfate, unspecified form"/>
</dbReference>
<dbReference type="GlyGen" id="P05109">
    <property type="glycosylation" value="1 site, 1 O-linked glycan (1 site)"/>
</dbReference>
<dbReference type="iPTMnet" id="P05109"/>
<dbReference type="PhosphoSitePlus" id="P05109"/>
<dbReference type="SwissPalm" id="P05109"/>
<dbReference type="BioMuta" id="S100A8"/>
<dbReference type="DMDM" id="115442"/>
<dbReference type="jPOST" id="P05109"/>
<dbReference type="MassIVE" id="P05109"/>
<dbReference type="PaxDb" id="9606-ENSP00000357722"/>
<dbReference type="PeptideAtlas" id="P05109"/>
<dbReference type="PRIDE" id="P05109"/>
<dbReference type="ProteomicsDB" id="51795"/>
<dbReference type="TopDownProteomics" id="P05109"/>
<dbReference type="ABCD" id="P05109">
    <property type="antibodies" value="1 sequenced antibody"/>
</dbReference>
<dbReference type="Antibodypedia" id="3463">
    <property type="antibodies" value="1277 antibodies from 43 providers"/>
</dbReference>
<dbReference type="DNASU" id="6279"/>
<dbReference type="Ensembl" id="ENST00000368732.5">
    <property type="protein sequence ID" value="ENSP00000357721.1"/>
    <property type="gene ID" value="ENSG00000143546.10"/>
</dbReference>
<dbReference type="Ensembl" id="ENST00000368733.4">
    <property type="protein sequence ID" value="ENSP00000357722.3"/>
    <property type="gene ID" value="ENSG00000143546.10"/>
</dbReference>
<dbReference type="GeneID" id="6279"/>
<dbReference type="KEGG" id="hsa:6279"/>
<dbReference type="MANE-Select" id="ENST00000368733.4">
    <property type="protein sequence ID" value="ENSP00000357722.3"/>
    <property type="RefSeq nucleotide sequence ID" value="NM_002964.5"/>
    <property type="RefSeq protein sequence ID" value="NP_002955.2"/>
</dbReference>
<dbReference type="UCSC" id="uc001fbs.3">
    <property type="organism name" value="human"/>
</dbReference>
<dbReference type="AGR" id="HGNC:10498"/>
<dbReference type="CTD" id="6279"/>
<dbReference type="DisGeNET" id="6279"/>
<dbReference type="GeneCards" id="S100A8"/>
<dbReference type="HGNC" id="HGNC:10498">
    <property type="gene designation" value="S100A8"/>
</dbReference>
<dbReference type="HPA" id="ENSG00000143546">
    <property type="expression patterns" value="Tissue enhanced (bone marrow, esophagus, vagina)"/>
</dbReference>
<dbReference type="MIM" id="123885">
    <property type="type" value="gene"/>
</dbReference>
<dbReference type="neXtProt" id="NX_P05109"/>
<dbReference type="OpenTargets" id="ENSG00000143546"/>
<dbReference type="PharmGKB" id="PA34910"/>
<dbReference type="VEuPathDB" id="HostDB:ENSG00000143546"/>
<dbReference type="eggNOG" id="ENOG502SA01">
    <property type="taxonomic scope" value="Eukaryota"/>
</dbReference>
<dbReference type="GeneTree" id="ENSGT00910000144329"/>
<dbReference type="HOGENOM" id="CLU_138624_6_0_1"/>
<dbReference type="InParanoid" id="P05109"/>
<dbReference type="OMA" id="NYHAIYR"/>
<dbReference type="OrthoDB" id="26525at2759"/>
<dbReference type="PAN-GO" id="P05109">
    <property type="GO annotations" value="7 GO annotations based on evolutionary models"/>
</dbReference>
<dbReference type="PhylomeDB" id="P05109"/>
<dbReference type="TreeFam" id="TF332727"/>
<dbReference type="PathwayCommons" id="P05109"/>
<dbReference type="Reactome" id="R-HSA-1236974">
    <property type="pathway name" value="ER-Phagosome pathway"/>
</dbReference>
<dbReference type="Reactome" id="R-HSA-166058">
    <property type="pathway name" value="MyD88:MAL(TIRAP) cascade initiated on plasma membrane"/>
</dbReference>
<dbReference type="Reactome" id="R-HSA-5602498">
    <property type="pathway name" value="MyD88 deficiency (TLR2/4)"/>
</dbReference>
<dbReference type="Reactome" id="R-HSA-5603041">
    <property type="pathway name" value="IRAK4 deficiency (TLR2/4)"/>
</dbReference>
<dbReference type="Reactome" id="R-HSA-5668599">
    <property type="pathway name" value="RHO GTPases Activate NADPH Oxidases"/>
</dbReference>
<dbReference type="Reactome" id="R-HSA-5686938">
    <property type="pathway name" value="Regulation of TLR by endogenous ligand"/>
</dbReference>
<dbReference type="Reactome" id="R-HSA-6798695">
    <property type="pathway name" value="Neutrophil degranulation"/>
</dbReference>
<dbReference type="Reactome" id="R-HSA-6799990">
    <property type="pathway name" value="Metal sequestration by antimicrobial proteins"/>
</dbReference>
<dbReference type="SignaLink" id="P05109"/>
<dbReference type="SIGNOR" id="P05109"/>
<dbReference type="BioGRID-ORCS" id="6279">
    <property type="hits" value="7 hits in 1148 CRISPR screens"/>
</dbReference>
<dbReference type="CD-CODE" id="232F8A39">
    <property type="entry name" value="P-body"/>
</dbReference>
<dbReference type="CD-CODE" id="91857CE7">
    <property type="entry name" value="Nucleolus"/>
</dbReference>
<dbReference type="ChiTaRS" id="S100A8">
    <property type="organism name" value="human"/>
</dbReference>
<dbReference type="EvolutionaryTrace" id="P05109"/>
<dbReference type="GeneWiki" id="S100_calcium_binding_protein_A8"/>
<dbReference type="GenomeRNAi" id="6279"/>
<dbReference type="Pharos" id="P05109">
    <property type="development level" value="Tbio"/>
</dbReference>
<dbReference type="PRO" id="PR:P05109"/>
<dbReference type="Proteomes" id="UP000005640">
    <property type="component" value="Chromosome 1"/>
</dbReference>
<dbReference type="RNAct" id="P05109">
    <property type="molecule type" value="protein"/>
</dbReference>
<dbReference type="Bgee" id="ENSG00000143546">
    <property type="expression patterns" value="Expressed in pharyngeal mucosa and 185 other cell types or tissues"/>
</dbReference>
<dbReference type="GO" id="GO:1990660">
    <property type="term" value="C:calprotectin complex"/>
    <property type="evidence" value="ECO:0000353"/>
    <property type="project" value="ComplexPortal"/>
</dbReference>
<dbReference type="GO" id="GO:0062023">
    <property type="term" value="C:collagen-containing extracellular matrix"/>
    <property type="evidence" value="ECO:0007005"/>
    <property type="project" value="BHF-UCL"/>
</dbReference>
<dbReference type="GO" id="GO:0005737">
    <property type="term" value="C:cytoplasm"/>
    <property type="evidence" value="ECO:0000318"/>
    <property type="project" value="GO_Central"/>
</dbReference>
<dbReference type="GO" id="GO:0005856">
    <property type="term" value="C:cytoskeleton"/>
    <property type="evidence" value="ECO:0000304"/>
    <property type="project" value="UniProtKB"/>
</dbReference>
<dbReference type="GO" id="GO:0005829">
    <property type="term" value="C:cytosol"/>
    <property type="evidence" value="ECO:0000314"/>
    <property type="project" value="HPA"/>
</dbReference>
<dbReference type="GO" id="GO:0070062">
    <property type="term" value="C:extracellular exosome"/>
    <property type="evidence" value="ECO:0007005"/>
    <property type="project" value="UniProtKB"/>
</dbReference>
<dbReference type="GO" id="GO:0005576">
    <property type="term" value="C:extracellular region"/>
    <property type="evidence" value="ECO:0007005"/>
    <property type="project" value="BHF-UCL"/>
</dbReference>
<dbReference type="GO" id="GO:0005615">
    <property type="term" value="C:extracellular space"/>
    <property type="evidence" value="ECO:0000314"/>
    <property type="project" value="UniProtKB"/>
</dbReference>
<dbReference type="GO" id="GO:0045111">
    <property type="term" value="C:intermediate filament cytoskeleton"/>
    <property type="evidence" value="ECO:0000314"/>
    <property type="project" value="HPA"/>
</dbReference>
<dbReference type="GO" id="GO:0005634">
    <property type="term" value="C:nucleus"/>
    <property type="evidence" value="ECO:0007005"/>
    <property type="project" value="UniProtKB"/>
</dbReference>
<dbReference type="GO" id="GO:0005886">
    <property type="term" value="C:plasma membrane"/>
    <property type="evidence" value="ECO:0000304"/>
    <property type="project" value="UniProtKB"/>
</dbReference>
<dbReference type="GO" id="GO:1990661">
    <property type="term" value="C:S100A8 complex"/>
    <property type="evidence" value="ECO:0000353"/>
    <property type="project" value="ComplexPortal"/>
</dbReference>
<dbReference type="GO" id="GO:0034774">
    <property type="term" value="C:secretory granule lumen"/>
    <property type="evidence" value="ECO:0000304"/>
    <property type="project" value="Reactome"/>
</dbReference>
<dbReference type="GO" id="GO:0050544">
    <property type="term" value="F:arachidonate binding"/>
    <property type="evidence" value="ECO:0000304"/>
    <property type="project" value="UniProtKB"/>
</dbReference>
<dbReference type="GO" id="GO:0005509">
    <property type="term" value="F:calcium ion binding"/>
    <property type="evidence" value="ECO:0000318"/>
    <property type="project" value="GO_Central"/>
</dbReference>
<dbReference type="GO" id="GO:0048306">
    <property type="term" value="F:calcium-dependent protein binding"/>
    <property type="evidence" value="ECO:0000318"/>
    <property type="project" value="GO_Central"/>
</dbReference>
<dbReference type="GO" id="GO:0008017">
    <property type="term" value="F:microtubule binding"/>
    <property type="evidence" value="ECO:0000304"/>
    <property type="project" value="UniProtKB"/>
</dbReference>
<dbReference type="GO" id="GO:0050786">
    <property type="term" value="F:RAGE receptor binding"/>
    <property type="evidence" value="ECO:0000304"/>
    <property type="project" value="UniProtKB"/>
</dbReference>
<dbReference type="GO" id="GO:0035662">
    <property type="term" value="F:Toll-like receptor 4 binding"/>
    <property type="evidence" value="ECO:0000304"/>
    <property type="project" value="UniProtKB"/>
</dbReference>
<dbReference type="GO" id="GO:0008270">
    <property type="term" value="F:zinc ion binding"/>
    <property type="evidence" value="ECO:0000304"/>
    <property type="project" value="UniProtKB"/>
</dbReference>
<dbReference type="GO" id="GO:0006915">
    <property type="term" value="P:apoptotic process"/>
    <property type="evidence" value="ECO:0007669"/>
    <property type="project" value="UniProtKB-KW"/>
</dbReference>
<dbReference type="GO" id="GO:0014002">
    <property type="term" value="P:astrocyte development"/>
    <property type="evidence" value="ECO:0007669"/>
    <property type="project" value="Ensembl"/>
</dbReference>
<dbReference type="GO" id="GO:0035425">
    <property type="term" value="P:autocrine signaling"/>
    <property type="evidence" value="ECO:0007669"/>
    <property type="project" value="Ensembl"/>
</dbReference>
<dbReference type="GO" id="GO:0006914">
    <property type="term" value="P:autophagy"/>
    <property type="evidence" value="ECO:0000314"/>
    <property type="project" value="UniProtKB"/>
</dbReference>
<dbReference type="GO" id="GO:0002544">
    <property type="term" value="P:chronic inflammatory response"/>
    <property type="evidence" value="ECO:0007669"/>
    <property type="project" value="Ensembl"/>
</dbReference>
<dbReference type="GO" id="GO:0042742">
    <property type="term" value="P:defense response to bacterium"/>
    <property type="evidence" value="ECO:0000304"/>
    <property type="project" value="UniProtKB"/>
</dbReference>
<dbReference type="GO" id="GO:0050832">
    <property type="term" value="P:defense response to fungus"/>
    <property type="evidence" value="ECO:0000304"/>
    <property type="project" value="UniProtKB"/>
</dbReference>
<dbReference type="GO" id="GO:0043542">
    <property type="term" value="P:endothelial cell migration"/>
    <property type="evidence" value="ECO:0000318"/>
    <property type="project" value="GO_Central"/>
</dbReference>
<dbReference type="GO" id="GO:0006954">
    <property type="term" value="P:inflammatory response"/>
    <property type="evidence" value="ECO:0000304"/>
    <property type="project" value="ProtInc"/>
</dbReference>
<dbReference type="GO" id="GO:0045087">
    <property type="term" value="P:innate immune response"/>
    <property type="evidence" value="ECO:0007669"/>
    <property type="project" value="UniProtKB-KW"/>
</dbReference>
<dbReference type="GO" id="GO:0002523">
    <property type="term" value="P:leukocyte migration involved in inflammatory response"/>
    <property type="evidence" value="ECO:0000314"/>
    <property type="project" value="UniProtKB"/>
</dbReference>
<dbReference type="GO" id="GO:0070488">
    <property type="term" value="P:neutrophil aggregation"/>
    <property type="evidence" value="ECO:0000314"/>
    <property type="project" value="UniProtKB"/>
</dbReference>
<dbReference type="GO" id="GO:0030593">
    <property type="term" value="P:neutrophil chemotaxis"/>
    <property type="evidence" value="ECO:0000314"/>
    <property type="project" value="UniProtKB"/>
</dbReference>
<dbReference type="GO" id="GO:0002790">
    <property type="term" value="P:peptide secretion"/>
    <property type="evidence" value="ECO:0007669"/>
    <property type="project" value="Ensembl"/>
</dbReference>
<dbReference type="GO" id="GO:0018119">
    <property type="term" value="P:peptidyl-cysteine S-nitrosylation"/>
    <property type="evidence" value="ECO:0000315"/>
    <property type="project" value="UniProtKB"/>
</dbReference>
<dbReference type="GO" id="GO:0030307">
    <property type="term" value="P:positive regulation of cell growth"/>
    <property type="evidence" value="ECO:0000304"/>
    <property type="project" value="UniProtKB"/>
</dbReference>
<dbReference type="GO" id="GO:0050729">
    <property type="term" value="P:positive regulation of inflammatory response"/>
    <property type="evidence" value="ECO:0000314"/>
    <property type="project" value="UniProtKB"/>
</dbReference>
<dbReference type="GO" id="GO:2001244">
    <property type="term" value="P:positive regulation of intrinsic apoptotic signaling pathway"/>
    <property type="evidence" value="ECO:0000314"/>
    <property type="project" value="UniProtKB"/>
</dbReference>
<dbReference type="GO" id="GO:0051092">
    <property type="term" value="P:positive regulation of NF-kappaB transcription factor activity"/>
    <property type="evidence" value="ECO:0000304"/>
    <property type="project" value="UniProtKB"/>
</dbReference>
<dbReference type="GO" id="GO:0002793">
    <property type="term" value="P:positive regulation of peptide secretion"/>
    <property type="evidence" value="ECO:0007669"/>
    <property type="project" value="Ensembl"/>
</dbReference>
<dbReference type="GO" id="GO:0051493">
    <property type="term" value="P:regulation of cytoskeleton organization"/>
    <property type="evidence" value="ECO:0000304"/>
    <property type="project" value="UniProtKB"/>
</dbReference>
<dbReference type="GO" id="GO:0034121">
    <property type="term" value="P:regulation of toll-like receptor signaling pathway"/>
    <property type="evidence" value="ECO:0000303"/>
    <property type="project" value="ComplexPortal"/>
</dbReference>
<dbReference type="GO" id="GO:0045471">
    <property type="term" value="P:response to ethanol"/>
    <property type="evidence" value="ECO:0007669"/>
    <property type="project" value="Ensembl"/>
</dbReference>
<dbReference type="GO" id="GO:0032496">
    <property type="term" value="P:response to lipopolysaccharide"/>
    <property type="evidence" value="ECO:0000318"/>
    <property type="project" value="GO_Central"/>
</dbReference>
<dbReference type="GO" id="GO:0010043">
    <property type="term" value="P:response to zinc ion"/>
    <property type="evidence" value="ECO:0007669"/>
    <property type="project" value="Ensembl"/>
</dbReference>
<dbReference type="CDD" id="cd05030">
    <property type="entry name" value="calgranulins"/>
    <property type="match status" value="1"/>
</dbReference>
<dbReference type="FunFam" id="1.10.238.10:FF:000344">
    <property type="entry name" value="Protein S100-A8"/>
    <property type="match status" value="1"/>
</dbReference>
<dbReference type="Gene3D" id="1.10.238.10">
    <property type="entry name" value="EF-hand"/>
    <property type="match status" value="1"/>
</dbReference>
<dbReference type="InterPro" id="IPR011992">
    <property type="entry name" value="EF-hand-dom_pair"/>
</dbReference>
<dbReference type="InterPro" id="IPR018247">
    <property type="entry name" value="EF_Hand_1_Ca_BS"/>
</dbReference>
<dbReference type="InterPro" id="IPR002048">
    <property type="entry name" value="EF_hand_dom"/>
</dbReference>
<dbReference type="InterPro" id="IPR001751">
    <property type="entry name" value="S100/CaBP7/8-like_CS"/>
</dbReference>
<dbReference type="InterPro" id="IPR013787">
    <property type="entry name" value="S100_Ca-bd_sub"/>
</dbReference>
<dbReference type="PANTHER" id="PTHR11639:SF5">
    <property type="entry name" value="PROTEIN S100-A8"/>
    <property type="match status" value="1"/>
</dbReference>
<dbReference type="PANTHER" id="PTHR11639">
    <property type="entry name" value="S100 CALCIUM-BINDING PROTEIN"/>
    <property type="match status" value="1"/>
</dbReference>
<dbReference type="Pfam" id="PF01023">
    <property type="entry name" value="S_100"/>
    <property type="match status" value="1"/>
</dbReference>
<dbReference type="SMART" id="SM01394">
    <property type="entry name" value="S_100"/>
    <property type="match status" value="1"/>
</dbReference>
<dbReference type="SUPFAM" id="SSF47473">
    <property type="entry name" value="EF-hand"/>
    <property type="match status" value="1"/>
</dbReference>
<dbReference type="PROSITE" id="PS00018">
    <property type="entry name" value="EF_HAND_1"/>
    <property type="match status" value="1"/>
</dbReference>
<dbReference type="PROSITE" id="PS50222">
    <property type="entry name" value="EF_HAND_2"/>
    <property type="match status" value="1"/>
</dbReference>
<dbReference type="PROSITE" id="PS00303">
    <property type="entry name" value="S100_CABP"/>
    <property type="match status" value="1"/>
</dbReference>
<organism>
    <name type="scientific">Homo sapiens</name>
    <name type="common">Human</name>
    <dbReference type="NCBI Taxonomy" id="9606"/>
    <lineage>
        <taxon>Eukaryota</taxon>
        <taxon>Metazoa</taxon>
        <taxon>Chordata</taxon>
        <taxon>Craniata</taxon>
        <taxon>Vertebrata</taxon>
        <taxon>Euteleostomi</taxon>
        <taxon>Mammalia</taxon>
        <taxon>Eutheria</taxon>
        <taxon>Euarchontoglires</taxon>
        <taxon>Primates</taxon>
        <taxon>Haplorrhini</taxon>
        <taxon>Catarrhini</taxon>
        <taxon>Hominidae</taxon>
        <taxon>Homo</taxon>
    </lineage>
</organism>
<reference key="1">
    <citation type="journal article" date="1987" name="Nature">
        <title>A clue to the basic defect in cystic fibrosis from cloning the CF antigen gene.</title>
        <authorList>
            <person name="Dorin J.R."/>
            <person name="Novak M."/>
            <person name="Hill R.E."/>
            <person name="Brock D.J.H."/>
            <person name="Secher D.S."/>
            <person name="van Heyningen V."/>
        </authorList>
    </citation>
    <scope>NUCLEOTIDE SEQUENCE [MRNA]</scope>
</reference>
<reference key="2">
    <citation type="journal article" date="1987" name="Nature">
        <title>Two calcium-binding proteins in infiltrate macrophages of rheumatoid arthritis.</title>
        <authorList>
            <person name="Odink K."/>
            <person name="Cerletti N."/>
            <person name="Bruggen J."/>
            <person name="Clerc R.G."/>
            <person name="Tarcsay L."/>
            <person name="Zwaldo G."/>
            <person name="Gerhards G."/>
            <person name="Schlegel R."/>
            <person name="Sorg C."/>
        </authorList>
    </citation>
    <scope>NUCLEOTIDE SEQUENCE [MRNA]</scope>
</reference>
<reference key="3">
    <citation type="journal article" date="1988" name="Mol. Cell. Biol.">
        <title>Cloning and expression of two human genes encoding calcium-binding proteins that are regulated during myeloid differentiation.</title>
        <authorList>
            <person name="Lagasse E."/>
            <person name="Clerc R.G."/>
        </authorList>
    </citation>
    <scope>NUCLEOTIDE SEQUENCE [GENOMIC DNA]</scope>
</reference>
<reference key="4">
    <citation type="journal article" date="1991" name="Biol. Chem. Hoppe-Seyler">
        <title>The calcium-binding protein MRP-8 is produced by human pulmonary tumor cells.</title>
        <authorList>
            <person name="Schaefer T."/>
            <person name="Sachse G.E."/>
            <person name="Gassen H.G."/>
        </authorList>
    </citation>
    <scope>NUCLEOTIDE SEQUENCE [MRNA]</scope>
    <scope>PROTEIN SEQUENCE OF 1-30</scope>
</reference>
<reference key="5">
    <citation type="journal article" date="2004" name="Nat. Genet.">
        <title>Complete sequencing and characterization of 21,243 full-length human cDNAs.</title>
        <authorList>
            <person name="Ota T."/>
            <person name="Suzuki Y."/>
            <person name="Nishikawa T."/>
            <person name="Otsuki T."/>
            <person name="Sugiyama T."/>
            <person name="Irie R."/>
            <person name="Wakamatsu A."/>
            <person name="Hayashi K."/>
            <person name="Sato H."/>
            <person name="Nagai K."/>
            <person name="Kimura K."/>
            <person name="Makita H."/>
            <person name="Sekine M."/>
            <person name="Obayashi M."/>
            <person name="Nishi T."/>
            <person name="Shibahara T."/>
            <person name="Tanaka T."/>
            <person name="Ishii S."/>
            <person name="Yamamoto J."/>
            <person name="Saito K."/>
            <person name="Kawai Y."/>
            <person name="Isono Y."/>
            <person name="Nakamura Y."/>
            <person name="Nagahari K."/>
            <person name="Murakami K."/>
            <person name="Yasuda T."/>
            <person name="Iwayanagi T."/>
            <person name="Wagatsuma M."/>
            <person name="Shiratori A."/>
            <person name="Sudo H."/>
            <person name="Hosoiri T."/>
            <person name="Kaku Y."/>
            <person name="Kodaira H."/>
            <person name="Kondo H."/>
            <person name="Sugawara M."/>
            <person name="Takahashi M."/>
            <person name="Kanda K."/>
            <person name="Yokoi T."/>
            <person name="Furuya T."/>
            <person name="Kikkawa E."/>
            <person name="Omura Y."/>
            <person name="Abe K."/>
            <person name="Kamihara K."/>
            <person name="Katsuta N."/>
            <person name="Sato K."/>
            <person name="Tanikawa M."/>
            <person name="Yamazaki M."/>
            <person name="Ninomiya K."/>
            <person name="Ishibashi T."/>
            <person name="Yamashita H."/>
            <person name="Murakawa K."/>
            <person name="Fujimori K."/>
            <person name="Tanai H."/>
            <person name="Kimata M."/>
            <person name="Watanabe M."/>
            <person name="Hiraoka S."/>
            <person name="Chiba Y."/>
            <person name="Ishida S."/>
            <person name="Ono Y."/>
            <person name="Takiguchi S."/>
            <person name="Watanabe S."/>
            <person name="Yosida M."/>
            <person name="Hotuta T."/>
            <person name="Kusano J."/>
            <person name="Kanehori K."/>
            <person name="Takahashi-Fujii A."/>
            <person name="Hara H."/>
            <person name="Tanase T.-O."/>
            <person name="Nomura Y."/>
            <person name="Togiya S."/>
            <person name="Komai F."/>
            <person name="Hara R."/>
            <person name="Takeuchi K."/>
            <person name="Arita M."/>
            <person name="Imose N."/>
            <person name="Musashino K."/>
            <person name="Yuuki H."/>
            <person name="Oshima A."/>
            <person name="Sasaki N."/>
            <person name="Aotsuka S."/>
            <person name="Yoshikawa Y."/>
            <person name="Matsunawa H."/>
            <person name="Ichihara T."/>
            <person name="Shiohata N."/>
            <person name="Sano S."/>
            <person name="Moriya S."/>
            <person name="Momiyama H."/>
            <person name="Satoh N."/>
            <person name="Takami S."/>
            <person name="Terashima Y."/>
            <person name="Suzuki O."/>
            <person name="Nakagawa S."/>
            <person name="Senoh A."/>
            <person name="Mizoguchi H."/>
            <person name="Goto Y."/>
            <person name="Shimizu F."/>
            <person name="Wakebe H."/>
            <person name="Hishigaki H."/>
            <person name="Watanabe T."/>
            <person name="Sugiyama A."/>
            <person name="Takemoto M."/>
            <person name="Kawakami B."/>
            <person name="Yamazaki M."/>
            <person name="Watanabe K."/>
            <person name="Kumagai A."/>
            <person name="Itakura S."/>
            <person name="Fukuzumi Y."/>
            <person name="Fujimori Y."/>
            <person name="Komiyama M."/>
            <person name="Tashiro H."/>
            <person name="Tanigami A."/>
            <person name="Fujiwara T."/>
            <person name="Ono T."/>
            <person name="Yamada K."/>
            <person name="Fujii Y."/>
            <person name="Ozaki K."/>
            <person name="Hirao M."/>
            <person name="Ohmori Y."/>
            <person name="Kawabata A."/>
            <person name="Hikiji T."/>
            <person name="Kobatake N."/>
            <person name="Inagaki H."/>
            <person name="Ikema Y."/>
            <person name="Okamoto S."/>
            <person name="Okitani R."/>
            <person name="Kawakami T."/>
            <person name="Noguchi S."/>
            <person name="Itoh T."/>
            <person name="Shigeta K."/>
            <person name="Senba T."/>
            <person name="Matsumura K."/>
            <person name="Nakajima Y."/>
            <person name="Mizuno T."/>
            <person name="Morinaga M."/>
            <person name="Sasaki M."/>
            <person name="Togashi T."/>
            <person name="Oyama M."/>
            <person name="Hata H."/>
            <person name="Watanabe M."/>
            <person name="Komatsu T."/>
            <person name="Mizushima-Sugano J."/>
            <person name="Satoh T."/>
            <person name="Shirai Y."/>
            <person name="Takahashi Y."/>
            <person name="Nakagawa K."/>
            <person name="Okumura K."/>
            <person name="Nagase T."/>
            <person name="Nomura N."/>
            <person name="Kikuchi H."/>
            <person name="Masuho Y."/>
            <person name="Yamashita R."/>
            <person name="Nakai K."/>
            <person name="Yada T."/>
            <person name="Nakamura Y."/>
            <person name="Ohara O."/>
            <person name="Isogai T."/>
            <person name="Sugano S."/>
        </authorList>
    </citation>
    <scope>NUCLEOTIDE SEQUENCE [LARGE SCALE MRNA]</scope>
    <source>
        <tissue>Tongue</tissue>
    </source>
</reference>
<reference key="6">
    <citation type="submission" date="2004-05" db="EMBL/GenBank/DDBJ databases">
        <title>Cloning of human full open reading frames in Gateway(TM) system entry vector (pDONR201).</title>
        <authorList>
            <person name="Ebert L."/>
            <person name="Schick M."/>
            <person name="Neubert P."/>
            <person name="Schatten R."/>
            <person name="Henze S."/>
            <person name="Korn B."/>
        </authorList>
    </citation>
    <scope>NUCLEOTIDE SEQUENCE [LARGE SCALE MRNA]</scope>
</reference>
<reference key="7">
    <citation type="submission" date="2004-10" db="EMBL/GenBank/DDBJ databases">
        <title>Cloning of human full-length CDSs in BD Creator(TM) system donor vector.</title>
        <authorList>
            <person name="Kalnine N."/>
            <person name="Chen X."/>
            <person name="Rolfs A."/>
            <person name="Halleck A."/>
            <person name="Hines L."/>
            <person name="Eisenstein S."/>
            <person name="Koundinya M."/>
            <person name="Raphael J."/>
            <person name="Moreira D."/>
            <person name="Kelley T."/>
            <person name="LaBaer J."/>
            <person name="Lin Y."/>
            <person name="Phelan M."/>
            <person name="Farmer A."/>
        </authorList>
    </citation>
    <scope>NUCLEOTIDE SEQUENCE [LARGE SCALE MRNA]</scope>
</reference>
<reference key="8">
    <citation type="journal article" date="2006" name="Nature">
        <title>The DNA sequence and biological annotation of human chromosome 1.</title>
        <authorList>
            <person name="Gregory S.G."/>
            <person name="Barlow K.F."/>
            <person name="McLay K.E."/>
            <person name="Kaul R."/>
            <person name="Swarbreck D."/>
            <person name="Dunham A."/>
            <person name="Scott C.E."/>
            <person name="Howe K.L."/>
            <person name="Woodfine K."/>
            <person name="Spencer C.C.A."/>
            <person name="Jones M.C."/>
            <person name="Gillson C."/>
            <person name="Searle S."/>
            <person name="Zhou Y."/>
            <person name="Kokocinski F."/>
            <person name="McDonald L."/>
            <person name="Evans R."/>
            <person name="Phillips K."/>
            <person name="Atkinson A."/>
            <person name="Cooper R."/>
            <person name="Jones C."/>
            <person name="Hall R.E."/>
            <person name="Andrews T.D."/>
            <person name="Lloyd C."/>
            <person name="Ainscough R."/>
            <person name="Almeida J.P."/>
            <person name="Ambrose K.D."/>
            <person name="Anderson F."/>
            <person name="Andrew R.W."/>
            <person name="Ashwell R.I.S."/>
            <person name="Aubin K."/>
            <person name="Babbage A.K."/>
            <person name="Bagguley C.L."/>
            <person name="Bailey J."/>
            <person name="Beasley H."/>
            <person name="Bethel G."/>
            <person name="Bird C.P."/>
            <person name="Bray-Allen S."/>
            <person name="Brown J.Y."/>
            <person name="Brown A.J."/>
            <person name="Buckley D."/>
            <person name="Burton J."/>
            <person name="Bye J."/>
            <person name="Carder C."/>
            <person name="Chapman J.C."/>
            <person name="Clark S.Y."/>
            <person name="Clarke G."/>
            <person name="Clee C."/>
            <person name="Cobley V."/>
            <person name="Collier R.E."/>
            <person name="Corby N."/>
            <person name="Coville G.J."/>
            <person name="Davies J."/>
            <person name="Deadman R."/>
            <person name="Dunn M."/>
            <person name="Earthrowl M."/>
            <person name="Ellington A.G."/>
            <person name="Errington H."/>
            <person name="Frankish A."/>
            <person name="Frankland J."/>
            <person name="French L."/>
            <person name="Garner P."/>
            <person name="Garnett J."/>
            <person name="Gay L."/>
            <person name="Ghori M.R.J."/>
            <person name="Gibson R."/>
            <person name="Gilby L.M."/>
            <person name="Gillett W."/>
            <person name="Glithero R.J."/>
            <person name="Grafham D.V."/>
            <person name="Griffiths C."/>
            <person name="Griffiths-Jones S."/>
            <person name="Grocock R."/>
            <person name="Hammond S."/>
            <person name="Harrison E.S.I."/>
            <person name="Hart E."/>
            <person name="Haugen E."/>
            <person name="Heath P.D."/>
            <person name="Holmes S."/>
            <person name="Holt K."/>
            <person name="Howden P.J."/>
            <person name="Hunt A.R."/>
            <person name="Hunt S.E."/>
            <person name="Hunter G."/>
            <person name="Isherwood J."/>
            <person name="James R."/>
            <person name="Johnson C."/>
            <person name="Johnson D."/>
            <person name="Joy A."/>
            <person name="Kay M."/>
            <person name="Kershaw J.K."/>
            <person name="Kibukawa M."/>
            <person name="Kimberley A.M."/>
            <person name="King A."/>
            <person name="Knights A.J."/>
            <person name="Lad H."/>
            <person name="Laird G."/>
            <person name="Lawlor S."/>
            <person name="Leongamornlert D.A."/>
            <person name="Lloyd D.M."/>
            <person name="Loveland J."/>
            <person name="Lovell J."/>
            <person name="Lush M.J."/>
            <person name="Lyne R."/>
            <person name="Martin S."/>
            <person name="Mashreghi-Mohammadi M."/>
            <person name="Matthews L."/>
            <person name="Matthews N.S.W."/>
            <person name="McLaren S."/>
            <person name="Milne S."/>
            <person name="Mistry S."/>
            <person name="Moore M.J.F."/>
            <person name="Nickerson T."/>
            <person name="O'Dell C.N."/>
            <person name="Oliver K."/>
            <person name="Palmeiri A."/>
            <person name="Palmer S.A."/>
            <person name="Parker A."/>
            <person name="Patel D."/>
            <person name="Pearce A.V."/>
            <person name="Peck A.I."/>
            <person name="Pelan S."/>
            <person name="Phelps K."/>
            <person name="Phillimore B.J."/>
            <person name="Plumb R."/>
            <person name="Rajan J."/>
            <person name="Raymond C."/>
            <person name="Rouse G."/>
            <person name="Saenphimmachak C."/>
            <person name="Sehra H.K."/>
            <person name="Sheridan E."/>
            <person name="Shownkeen R."/>
            <person name="Sims S."/>
            <person name="Skuce C.D."/>
            <person name="Smith M."/>
            <person name="Steward C."/>
            <person name="Subramanian S."/>
            <person name="Sycamore N."/>
            <person name="Tracey A."/>
            <person name="Tromans A."/>
            <person name="Van Helmond Z."/>
            <person name="Wall M."/>
            <person name="Wallis J.M."/>
            <person name="White S."/>
            <person name="Whitehead S.L."/>
            <person name="Wilkinson J.E."/>
            <person name="Willey D.L."/>
            <person name="Williams H."/>
            <person name="Wilming L."/>
            <person name="Wray P.W."/>
            <person name="Wu Z."/>
            <person name="Coulson A."/>
            <person name="Vaudin M."/>
            <person name="Sulston J.E."/>
            <person name="Durbin R.M."/>
            <person name="Hubbard T."/>
            <person name="Wooster R."/>
            <person name="Dunham I."/>
            <person name="Carter N.P."/>
            <person name="McVean G."/>
            <person name="Ross M.T."/>
            <person name="Harrow J."/>
            <person name="Olson M.V."/>
            <person name="Beck S."/>
            <person name="Rogers J."/>
            <person name="Bentley D.R."/>
        </authorList>
    </citation>
    <scope>NUCLEOTIDE SEQUENCE [LARGE SCALE GENOMIC DNA]</scope>
</reference>
<reference key="9">
    <citation type="submission" date="2005-09" db="EMBL/GenBank/DDBJ databases">
        <authorList>
            <person name="Mural R.J."/>
            <person name="Istrail S."/>
            <person name="Sutton G.G."/>
            <person name="Florea L."/>
            <person name="Halpern A.L."/>
            <person name="Mobarry C.M."/>
            <person name="Lippert R."/>
            <person name="Walenz B."/>
            <person name="Shatkay H."/>
            <person name="Dew I."/>
            <person name="Miller J.R."/>
            <person name="Flanigan M.J."/>
            <person name="Edwards N.J."/>
            <person name="Bolanos R."/>
            <person name="Fasulo D."/>
            <person name="Halldorsson B.V."/>
            <person name="Hannenhalli S."/>
            <person name="Turner R."/>
            <person name="Yooseph S."/>
            <person name="Lu F."/>
            <person name="Nusskern D.R."/>
            <person name="Shue B.C."/>
            <person name="Zheng X.H."/>
            <person name="Zhong F."/>
            <person name="Delcher A.L."/>
            <person name="Huson D.H."/>
            <person name="Kravitz S.A."/>
            <person name="Mouchard L."/>
            <person name="Reinert K."/>
            <person name="Remington K.A."/>
            <person name="Clark A.G."/>
            <person name="Waterman M.S."/>
            <person name="Eichler E.E."/>
            <person name="Adams M.D."/>
            <person name="Hunkapiller M.W."/>
            <person name="Myers E.W."/>
            <person name="Venter J.C."/>
        </authorList>
    </citation>
    <scope>NUCLEOTIDE SEQUENCE [LARGE SCALE GENOMIC DNA]</scope>
</reference>
<reference key="10">
    <citation type="journal article" date="2004" name="Genome Res.">
        <title>The status, quality, and expansion of the NIH full-length cDNA project: the Mammalian Gene Collection (MGC).</title>
        <authorList>
            <consortium name="The MGC Project Team"/>
        </authorList>
    </citation>
    <scope>NUCLEOTIDE SEQUENCE [LARGE SCALE MRNA]</scope>
    <source>
        <tissue>Skeletal muscle</tissue>
    </source>
</reference>
<reference key="11">
    <citation type="journal article" date="1996" name="Biochem. Biophys. Res. Commun.">
        <title>Host-parasite interaction in human onchocerciasis: identification and sequence analysis of a novel human calgranulin.</title>
        <authorList>
            <person name="Marti T."/>
            <person name="Erttmann K.D."/>
            <person name="Gallin M.Y."/>
        </authorList>
    </citation>
    <scope>PROTEIN SEQUENCE OF 1-19; 24-35 AND 63-89</scope>
</reference>
<reference key="12">
    <citation type="journal article" date="1993" name="J. Dent. Res.">
        <title>In vitro antimicrobial activity of the human neutrophil cytosolic S-100 protein complex, calprotectin, against Capnocytophaga sputigena.</title>
        <authorList>
            <person name="Miyasaki K.T."/>
            <person name="Bodeau A.L."/>
            <person name="Murthy A.R."/>
            <person name="Lehrer R.I."/>
        </authorList>
    </citation>
    <scope>PROTEIN SEQUENCE OF 1-27</scope>
</reference>
<reference key="13">
    <citation type="journal article" date="1992" name="J. Biol. Chem.">
        <title>Translocation of a small cytosolic calcium-binding protein (MRP-8) to plasma membrane correlates with human neutrophil activation.</title>
        <authorList>
            <person name="Lemarchand P."/>
            <person name="Vaglio M."/>
            <person name="Mauel J."/>
            <person name="Markert M."/>
        </authorList>
    </citation>
    <scope>PROTEIN SEQUENCE OF 1-25</scope>
    <source>
        <tissue>Neutrophil</tissue>
    </source>
</reference>
<reference key="14">
    <citation type="journal article" date="1994" name="Biochem. Mol. Biol. Int.">
        <title>Calprotectin-like protein is related to soluble organic matrix in calcium oxalate urinary stone.</title>
        <authorList>
            <person name="Umekawa T."/>
            <person name="Kurita T."/>
        </authorList>
    </citation>
    <scope>PROTEIN SEQUENCE OF 1-20</scope>
</reference>
<reference key="15">
    <citation type="journal article" date="1994" name="Biol. Chem. Hoppe-Seyler">
        <title>Isolation of an ascitic oncodevelopmental protein exhibiting high sequence homology with calcium-binding protein MRP8.</title>
        <authorList>
            <person name="Nakai M."/>
            <person name="Ishikawa M."/>
            <person name="Hamada Y."/>
            <person name="Sugano S."/>
        </authorList>
    </citation>
    <scope>PROTEIN SEQUENCE OF 1-20</scope>
    <source>
        <tissue>Ascites</tissue>
    </source>
</reference>
<reference key="16">
    <citation type="journal article" date="1992" name="Electrophoresis">
        <title>Microsequences of 145 proteins recorded in the two-dimensional gel protein database of normal human epidermal keratinocytes.</title>
        <authorList>
            <person name="Rasmussen H.H."/>
            <person name="van Damme J."/>
            <person name="Puype M."/>
            <person name="Gesser B."/>
            <person name="Celis J.E."/>
            <person name="Vandekerckhove J."/>
        </authorList>
    </citation>
    <scope>PROTEIN SEQUENCE OF 38-47 AND 50-56</scope>
    <source>
        <tissue>Keratinocyte</tissue>
    </source>
</reference>
<reference key="17">
    <citation type="journal article" date="1997" name="J. Biol. Chem.">
        <title>Myeloid-related protein (MRP) 8 and MRP14, calcium-binding proteins of the S100 family, are secreted by activated monocytes via a novel, tubulin-dependent pathway.</title>
        <authorList>
            <person name="Rammes A."/>
            <person name="Roth J."/>
            <person name="Goebeler M."/>
            <person name="Klempt M."/>
            <person name="Hartmann M."/>
            <person name="Sorg C."/>
        </authorList>
    </citation>
    <scope>SUBCELLULAR LOCATION</scope>
    <scope>SUBUNIT</scope>
    <scope>TISSUE SPECIFICITY</scope>
</reference>
<reference key="18">
    <citation type="journal article" date="2001" name="Biochem. Biophys. Res. Commun.">
        <title>The microbial receptor CEACAM3 is linked to the calprotectin complex in granulocytes.</title>
        <authorList>
            <person name="Streichert T."/>
            <person name="Ebrahimnejad A."/>
            <person name="Ganzer S."/>
            <person name="Flayeh R."/>
            <person name="Wagener C."/>
            <person name="Bruemmer J."/>
        </authorList>
    </citation>
    <scope>INTERACTION WITH CEACAM3</scope>
</reference>
<reference key="19">
    <citation type="journal article" date="2003" name="J. Immunol.">
        <title>Proinflammatory activities of S100: proteins S100A8, S100A9, and S100A8/A9 induce neutrophil chemotaxis and adhesion.</title>
        <authorList>
            <person name="Ryckman C."/>
            <person name="Vandal K."/>
            <person name="Rouleau P."/>
            <person name="Talbot M."/>
            <person name="Tessier P.A."/>
        </authorList>
    </citation>
    <scope>FUNCTION</scope>
</reference>
<reference key="20">
    <citation type="journal article" date="2004" name="Blood">
        <title>MRP8 and MRP14 control microtubule reorganization during transendothelial migration of phagocytes.</title>
        <authorList>
            <person name="Vogl T."/>
            <person name="Ludwig S."/>
            <person name="Goebeler M."/>
            <person name="Strey A."/>
            <person name="Thorey I.S."/>
            <person name="Reichelt R."/>
            <person name="Foell D."/>
            <person name="Gerke V."/>
            <person name="Manitz M.P."/>
            <person name="Nacken W."/>
            <person name="Werner S."/>
            <person name="Sorg C."/>
            <person name="Roth J."/>
        </authorList>
    </citation>
    <scope>FUNCTION</scope>
    <scope>INTERACTION WITH TUBULIN</scope>
</reference>
<reference key="21">
    <citation type="journal article" date="2005" name="Blood">
        <title>Myeloid-related proteins 8 and 14 induce a specific inflammatory response in human microvascular endothelial cells.</title>
        <authorList>
            <person name="Viemann D."/>
            <person name="Strey A."/>
            <person name="Janning A."/>
            <person name="Jurk K."/>
            <person name="Klimmek K."/>
            <person name="Vogl T."/>
            <person name="Hirono K."/>
            <person name="Ichida F."/>
            <person name="Foell D."/>
            <person name="Kehrel B."/>
            <person name="Gerke V."/>
            <person name="Sorg C."/>
            <person name="Roth J."/>
        </authorList>
    </citation>
    <scope>FUNCTION</scope>
    <scope>IDENTIFICATION BY MASS SPECTROMETRY</scope>
    <scope>SUBCELLULAR LOCATION</scope>
    <scope>TISSUE SPECIFICITY</scope>
</reference>
<reference key="22">
    <citation type="journal article" date="2005" name="FASEB J.">
        <title>The arachidonic acid-binding protein S100A8/A9 promotes NADPH oxidase activation by interaction with p67phox and Rac-2.</title>
        <authorList>
            <person name="Kerkhoff C."/>
            <person name="Nacken W."/>
            <person name="Benedyk M."/>
            <person name="Dagher M.C."/>
            <person name="Sopalla C."/>
            <person name="Doussiere J."/>
        </authorList>
    </citation>
    <scope>FUNCTION</scope>
    <scope>INTERACTION WITH NCF2/P67PHOX; RAC1 AND RAC2</scope>
</reference>
<reference key="23">
    <citation type="journal article" date="2005" name="Mediators Inflamm.">
        <title>Regulation of S100A8/A9 (calprotectin) binding to tumor cells by zinc ion and its implication for apoptosis-inducing activity.</title>
        <authorList>
            <person name="Nakatani Y."/>
            <person name="Yamazaki M."/>
            <person name="Chazin W.J."/>
            <person name="Yui S."/>
        </authorList>
    </citation>
    <scope>FUNCTION</scope>
    <scope>INHIBITION BY ZINC IONS</scope>
    <scope>SUBUNIT</scope>
</reference>
<reference key="24">
    <citation type="journal article" date="2008" name="J. Biol. Chem.">
        <title>Interaction between S100A8/A9 and annexin A6 is involved in the calcium-induced cell surface exposition of S100A8/A9.</title>
        <authorList>
            <person name="Bode G."/>
            <person name="Lueken A."/>
            <person name="Kerkhoff C."/>
            <person name="Roth J."/>
            <person name="Ludwig S."/>
            <person name="Nacken W."/>
        </authorList>
    </citation>
    <scope>SUBCELLULAR LOCATION</scope>
    <scope>INTERACTION WITH ANXA6</scope>
</reference>
<reference key="25">
    <citation type="journal article" date="2008" name="J. Immunol.">
        <title>S-nitrosylated S100A8: novel anti-inflammatory properties.</title>
        <authorList>
            <person name="Lim S.Y."/>
            <person name="Raftery M."/>
            <person name="Cai H."/>
            <person name="Hsu K."/>
            <person name="Yan W.X."/>
            <person name="Hseih H.L."/>
            <person name="Watts R.N."/>
            <person name="Richardson D."/>
            <person name="Thomas S."/>
            <person name="Perry M."/>
            <person name="Geczy C.L."/>
        </authorList>
    </citation>
    <scope>S-NITROSYLATION AT CYS-42</scope>
</reference>
<reference key="26">
    <citation type="journal article" date="2009" name="Antiinflamm. Antiallergy Agents Med. Chem.">
        <title>Anti-infective protective properties of S100 calgranulins.</title>
        <authorList>
            <person name="Hsu K."/>
            <person name="Champaiboon C."/>
            <person name="Guenther B.D."/>
            <person name="Sorenson B.S."/>
            <person name="Khammanivong A."/>
            <person name="Ross K.F."/>
            <person name="Geczy C.L."/>
            <person name="Herzberg M.C."/>
        </authorList>
    </citation>
    <scope>REVIEW</scope>
</reference>
<reference key="27">
    <citation type="journal article" date="2009" name="Eur. J. Pharmacol.">
        <title>S100A8/A9: a Janus-faced molecule in cancer therapy and tumorgenesis.</title>
        <authorList>
            <person name="Ghavami S."/>
            <person name="Chitayat S."/>
            <person name="Hashemi M."/>
            <person name="Eshraghi M."/>
            <person name="Chazin W.J."/>
            <person name="Halayko A.J."/>
            <person name="Kerkhoff C."/>
        </authorList>
    </citation>
    <scope>REVIEW</scope>
</reference>
<reference key="28">
    <citation type="journal article" date="2009" name="FEMS Immunol. Med. Microbiol.">
        <title>Substitution of methionine 63 or 83 in S100A9 and cysteine 42 in S100A8 abrogate the antifungal activities of S100A8/A9: potential role for oxidative regulation.</title>
        <authorList>
            <person name="Sroussi H.Y."/>
            <person name="Koehler G.A."/>
            <person name="Agabian N."/>
            <person name="Villines D."/>
            <person name="Palefsky J.M."/>
        </authorList>
    </citation>
    <scope>FUNCTION</scope>
    <scope>MUTAGENESIS OF CYS-42</scope>
</reference>
<reference key="29">
    <citation type="journal article" date="2009" name="J. Biol. Chem.">
        <title>Calprotectin S100A9 calcium-binding loops I and II are essential for keratinocyte resistance to bacterial invasion.</title>
        <authorList>
            <person name="Champaiboon C."/>
            <person name="Sappington K.J."/>
            <person name="Guenther B.D."/>
            <person name="Ross K.F."/>
            <person name="Herzberg M.C."/>
        </authorList>
    </citation>
    <scope>FUNCTION</scope>
    <scope>SUBUNIT</scope>
</reference>
<reference key="30">
    <citation type="journal article" date="2009" name="J. Leukoc. Biol.">
        <title>The endogenous Toll-like receptor 4 agonist S100A8/S100A9 (calprotectin) as innate amplifier of infection, autoimmunity, and cancer.</title>
        <authorList>
            <person name="Ehrchen J.M."/>
            <person name="Sunderkoetter C."/>
            <person name="Foell D."/>
            <person name="Vogl T."/>
            <person name="Roth J."/>
        </authorList>
    </citation>
    <scope>REVIEW</scope>
</reference>
<reference key="31">
    <citation type="journal article" date="2010" name="Cell Res.">
        <title>S100A8/A9 induces autophagy and apoptosis via ROS-mediated cross-talk between mitochondria and lysosomes that involves BNIP3.</title>
        <authorList>
            <person name="Ghavami S."/>
            <person name="Eshragi M."/>
            <person name="Ande S.R."/>
            <person name="Chazin W.J."/>
            <person name="Klonisch T."/>
            <person name="Halayko A.J."/>
            <person name="McNeill K.D."/>
            <person name="Hashemi M."/>
            <person name="Kerkhoff C."/>
            <person name="Los M."/>
        </authorList>
    </citation>
    <scope>FUNCTION</scope>
</reference>
<reference key="32">
    <citation type="journal article" date="2010" name="Immunol. Cell Biol.">
        <title>S100 Calgranulins in inflammatory arthritis.</title>
        <authorList>
            <person name="Perera C."/>
            <person name="McNeil H.P."/>
            <person name="Geczy C.L."/>
        </authorList>
    </citation>
    <scope>REVIEW</scope>
</reference>
<reference key="33">
    <citation type="journal article" date="2011" name="Amino Acids">
        <title>Inflammation-associated S100 proteins: new mechanisms that regulate function.</title>
        <authorList>
            <person name="Goyette J."/>
            <person name="Geczy C.L."/>
        </authorList>
    </citation>
    <scope>REVIEW</scope>
</reference>
<reference key="34">
    <citation type="journal article" date="2011" name="BMC Syst. Biol.">
        <title>Initial characterization of the human central proteome.</title>
        <authorList>
            <person name="Burkard T.R."/>
            <person name="Planyavsky M."/>
            <person name="Kaupe I."/>
            <person name="Breitwieser F.P."/>
            <person name="Buerckstuemmer T."/>
            <person name="Bennett K.L."/>
            <person name="Superti-Furga G."/>
            <person name="Colinge J."/>
        </authorList>
    </citation>
    <scope>IDENTIFICATION BY MASS SPECTROMETRY [LARGE SCALE ANALYSIS]</scope>
</reference>
<reference key="35">
    <citation type="journal article" date="2012" name="Arterioscler. Thromb. Vasc. Biol.">
        <title>S100A8 and S100A9 in cardiovascular biology and disease.</title>
        <authorList>
            <person name="Averill M.M."/>
            <person name="Kerkhoff C."/>
            <person name="Bornfeldt K.E."/>
        </authorList>
    </citation>
    <scope>REVIEW</scope>
</reference>
<reference key="36">
    <citation type="journal article" date="2012" name="Inflammation">
        <title>Dynamic mobility of immunological cells expressing S100A8 and S100A9 in vivo: a variety of functional roles of the two proteins as regulators in acute inflammatory reaction.</title>
        <authorList>
            <person name="Koike A."/>
            <person name="Arai S."/>
            <person name="Yamada S."/>
            <person name="Nagae A."/>
            <person name="Saita N."/>
            <person name="Itoh H."/>
            <person name="Uemoto S."/>
            <person name="Totani M."/>
            <person name="Ikemoto M."/>
        </authorList>
    </citation>
    <scope>FUNCTION</scope>
    <scope>SUBCELLULAR LOCATION</scope>
</reference>
<reference key="37">
    <citation type="journal article" date="2012" name="Int. J. Mol. Sci.">
        <title>Pro-inflammatory S100A8 and S100A9 proteins: self-assembly into multifunctional native and amyloid complexes.</title>
        <authorList>
            <person name="Vogl T."/>
            <person name="Gharibyan A.L."/>
            <person name="Morozova-Roche L.A."/>
        </authorList>
    </citation>
    <scope>REVIEW</scope>
</reference>
<reference key="38">
    <citation type="journal article" date="2012" name="J. Innate Immun.">
        <title>S100A8 and S100A9: new insights into their roles in malignancy.</title>
        <authorList>
            <person name="Srikrishna G."/>
        </authorList>
    </citation>
    <scope>REVIEW</scope>
</reference>
<reference key="39">
    <citation type="journal article" date="2012" name="Mol. Cell. Proteomics">
        <title>Comparative large-scale characterisation of plant vs. mammal proteins reveals similar and idiosyncratic N-alpha acetylation features.</title>
        <authorList>
            <person name="Bienvenut W.V."/>
            <person name="Sumpton D."/>
            <person name="Martinez A."/>
            <person name="Lilla S."/>
            <person name="Espagne C."/>
            <person name="Meinnel T."/>
            <person name="Giglione C."/>
        </authorList>
    </citation>
    <scope>IDENTIFICATION BY MASS SPECTROMETRY [LARGE SCALE ANALYSIS]</scope>
</reference>
<reference key="40">
    <citation type="journal article" date="2012" name="PLoS ONE">
        <title>Molecular interface of S100A8 with cytochrome b and NADPH oxidase activation.</title>
        <authorList>
            <person name="Berthier S."/>
            <person name="Nguyen M.V."/>
            <person name="Baillet A."/>
            <person name="Hograindleur M.A."/>
            <person name="Paclet M.H."/>
            <person name="Polack B."/>
            <person name="Morel F."/>
        </authorList>
    </citation>
    <scope>FUNCTION</scope>
    <scope>SUBCELLULAR LOCATION</scope>
    <scope>INTERACTION WITH CYBA AND CYBB</scope>
</reference>
<reference key="41">
    <citation type="journal article" date="2012" name="PLoS ONE">
        <title>Constitutive neutrophil apoptosis: regulation by cell concentration via S100 A8/9 and the MEK-ERK pathway.</title>
        <authorList>
            <person name="Atallah M."/>
            <person name="Krispin A."/>
            <person name="Trahtemberg U."/>
            <person name="Ben-Hamron S."/>
            <person name="Grau A."/>
            <person name="Verbovetski I."/>
            <person name="Mevorach D."/>
        </authorList>
    </citation>
    <scope>FUNCTION</scope>
    <scope>IDENTIFICATION BY MASS SPECTROMETRY</scope>
</reference>
<reference key="42">
    <citation type="journal article" date="2014" name="Cell">
        <title>Target-selective protein S-nitrosylation by sequence motif recognition.</title>
        <authorList>
            <person name="Jia J."/>
            <person name="Arif A."/>
            <person name="Terenzi F."/>
            <person name="Willard B."/>
            <person name="Plow E.F."/>
            <person name="Hazen S.L."/>
            <person name="Fox P.L."/>
        </authorList>
    </citation>
    <scope>FUNCTION</scope>
    <scope>INTERACTION WITH GAPDH</scope>
    <scope>ASSEMBLY IN THE INOS-S100A8/A9 COMPLEX</scope>
</reference>
<reference key="43">
    <citation type="journal article" date="2014" name="J. Proteomics">
        <title>An enzyme assisted RP-RPLC approach for in-depth analysis of human liver phosphoproteome.</title>
        <authorList>
            <person name="Bian Y."/>
            <person name="Song C."/>
            <person name="Cheng K."/>
            <person name="Dong M."/>
            <person name="Wang F."/>
            <person name="Huang J."/>
            <person name="Sun D."/>
            <person name="Wang L."/>
            <person name="Ye M."/>
            <person name="Zou H."/>
        </authorList>
    </citation>
    <scope>IDENTIFICATION BY MASS SPECTROMETRY [LARGE SCALE ANALYSIS]</scope>
    <source>
        <tissue>Liver</tissue>
    </source>
</reference>
<reference key="44">
    <citation type="journal article" date="2015" name="FASEB J.">
        <title>Glycosylation-dependent interaction between CD69 and S100A8/S100A9 complex is required for regulatory T-cell differentiation.</title>
        <authorList>
            <person name="Lin C.R."/>
            <person name="Wei T.Y."/>
            <person name="Tsai H.Y."/>
            <person name="Wu Y.T."/>
            <person name="Wu P.Y."/>
            <person name="Chen S.T."/>
        </authorList>
    </citation>
    <scope>FUNCTION</scope>
    <scope>INTERACTION WITH CD69</scope>
</reference>
<reference key="45">
    <citation type="journal article" date="2020" name="Cell Host Microbe">
        <title>Induction of alarmin S100A8/A9 mediates activation of aberrant neutrophils in the pathogenesis of COVID-19.</title>
        <authorList>
            <person name="Guo Q."/>
            <person name="Zhao Y."/>
            <person name="Li J."/>
            <person name="Liu J."/>
            <person name="Yang X."/>
            <person name="Guo X."/>
            <person name="Kuang M."/>
            <person name="Xia H."/>
            <person name="Zhang Z."/>
            <person name="Cao L."/>
            <person name="Luo Y."/>
            <person name="Bao L."/>
            <person name="Wang X."/>
            <person name="Wei X."/>
            <person name="Deng W."/>
            <person name="Wang N."/>
            <person name="Chen L."/>
            <person name="Chen J."/>
            <person name="Zhu H."/>
            <person name="Gao R."/>
            <person name="Qin C."/>
            <person name="Wang X."/>
            <person name="You F."/>
        </authorList>
    </citation>
    <scope>FUNCTION (MICROBIAL INFECTION)</scope>
    <scope>INDUCTION BY SARS-COV-2 INFECTION (MICROBIAL INFECTION)</scope>
    <scope>TISSUE SPECIFICITY</scope>
</reference>
<reference key="46">
    <citation type="journal article" date="2000" name="Acta Crystallogr. D">
        <title>The structure of human MRP8, a member of the S100 calcium-binding protein family, by MAD phasing at 1.9 A resolution.</title>
        <authorList>
            <person name="Ishikawa K."/>
            <person name="Nakagawa A."/>
            <person name="Tanaka I."/>
            <person name="Suzuki M."/>
            <person name="Nishihira J."/>
        </authorList>
    </citation>
    <scope>X-RAY CRYSTALLOGRAPHY (1.9 ANGSTROMS)</scope>
</reference>
<reference key="47">
    <citation type="journal article" date="2007" name="J. Mol. Biol.">
        <title>The crystal structure of the human (S100A8/S100A9)2 heterotetramer, calprotectin, illustrates how conformational changes of interacting alpha-helices can determine specific association of two EF-hand proteins.</title>
        <authorList>
            <person name="Korndoerfer I.P."/>
            <person name="Brueckner F."/>
            <person name="Skerra A."/>
        </authorList>
    </citation>
    <scope>X-RAY CRYSTALLOGRAPHY (1.8 ANGSTROMS) IN COMPLEX WITH S100A9</scope>
    <scope>SUBUNIT</scope>
    <scope>ZINC-BINDING</scope>
</reference>
<feature type="chain" id="PRO_0000143993" description="Protein S100-A8">
    <location>
        <begin position="1"/>
        <end position="93"/>
    </location>
</feature>
<feature type="domain" description="EF-hand 1" evidence="23">
    <location>
        <begin position="12"/>
        <end position="47"/>
    </location>
</feature>
<feature type="domain" description="EF-hand 2" evidence="3">
    <location>
        <begin position="46"/>
        <end position="81"/>
    </location>
</feature>
<feature type="binding site" evidence="23">
    <location>
        <position position="17"/>
    </location>
    <ligand>
        <name>Zn(2+)</name>
        <dbReference type="ChEBI" id="CHEBI:29105"/>
    </ligand>
</feature>
<feature type="binding site" evidence="23">
    <location>
        <position position="27"/>
    </location>
    <ligand>
        <name>Zn(2+)</name>
        <dbReference type="ChEBI" id="CHEBI:29105"/>
    </ligand>
</feature>
<feature type="binding site" evidence="23">
    <location>
        <position position="33"/>
    </location>
    <ligand>
        <name>Ca(2+)</name>
        <dbReference type="ChEBI" id="CHEBI:29108"/>
        <label>1</label>
        <note>low affinity</note>
    </ligand>
</feature>
<feature type="binding site" evidence="3">
    <location>
        <position position="59"/>
    </location>
    <ligand>
        <name>Ca(2+)</name>
        <dbReference type="ChEBI" id="CHEBI:29108"/>
        <label>2</label>
        <note>high affinity</note>
    </ligand>
</feature>
<feature type="binding site" evidence="3">
    <location>
        <position position="61"/>
    </location>
    <ligand>
        <name>Ca(2+)</name>
        <dbReference type="ChEBI" id="CHEBI:29108"/>
        <label>2</label>
        <note>high affinity</note>
    </ligand>
</feature>
<feature type="binding site" evidence="3">
    <location>
        <position position="63"/>
    </location>
    <ligand>
        <name>Ca(2+)</name>
        <dbReference type="ChEBI" id="CHEBI:29108"/>
        <label>2</label>
        <note>high affinity</note>
    </ligand>
</feature>
<feature type="binding site" evidence="3">
    <location>
        <position position="70"/>
    </location>
    <ligand>
        <name>Ca(2+)</name>
        <dbReference type="ChEBI" id="CHEBI:29108"/>
        <label>2</label>
        <note>high affinity</note>
    </ligand>
</feature>
<feature type="binding site" evidence="23">
    <location>
        <position position="83"/>
    </location>
    <ligand>
        <name>Zn(2+)</name>
        <dbReference type="ChEBI" id="CHEBI:29105"/>
    </ligand>
</feature>
<feature type="binding site" evidence="23">
    <location>
        <position position="87"/>
    </location>
    <ligand>
        <name>Zn(2+)</name>
        <dbReference type="ChEBI" id="CHEBI:29105"/>
    </ligand>
</feature>
<feature type="modified residue" description="S-nitrosocysteine" evidence="12">
    <location>
        <position position="42"/>
    </location>
</feature>
<feature type="mutagenesis site" description="Loss of antifungal activity." evidence="13">
    <original>C</original>
    <variation>A</variation>
    <location>
        <position position="42"/>
    </location>
</feature>
<feature type="sequence conflict" description="In Ref. 1; CAA68390." evidence="23" ref="1">
    <original>VAAHKKSHEESHKE</original>
    <variation>WQPTKKAMKKATKSS</variation>
    <location>
        <begin position="80"/>
        <end position="93"/>
    </location>
</feature>
<feature type="helix" evidence="26">
    <location>
        <begin position="4"/>
        <end position="20"/>
    </location>
</feature>
<feature type="strand" evidence="26">
    <location>
        <begin position="22"/>
        <end position="25"/>
    </location>
</feature>
<feature type="helix" evidence="26">
    <location>
        <begin position="31"/>
        <end position="41"/>
    </location>
</feature>
<feature type="helix" evidence="26">
    <location>
        <begin position="44"/>
        <end position="47"/>
    </location>
</feature>
<feature type="helix" evidence="26">
    <location>
        <begin position="51"/>
        <end position="58"/>
    </location>
</feature>
<feature type="strand" evidence="26">
    <location>
        <begin position="63"/>
        <end position="66"/>
    </location>
</feature>
<feature type="helix" evidence="26">
    <location>
        <begin position="68"/>
        <end position="86"/>
    </location>
</feature>
<name>S10A8_HUMAN</name>